<name>PATL1_MOUSE</name>
<evidence type="ECO:0000250" key="1"/>
<evidence type="ECO:0000250" key="2">
    <source>
        <dbReference type="UniProtKB" id="Q86TB9"/>
    </source>
</evidence>
<evidence type="ECO:0000256" key="3">
    <source>
        <dbReference type="SAM" id="MobiDB-lite"/>
    </source>
</evidence>
<evidence type="ECO:0000305" key="4"/>
<evidence type="ECO:0007744" key="5">
    <source>
    </source>
</evidence>
<evidence type="ECO:0007744" key="6">
    <source>
    </source>
</evidence>
<evidence type="ECO:0007744" key="7">
    <source>
    </source>
</evidence>
<accession>Q3TC46</accession>
<accession>Q3TD30</accession>
<accession>Q3U4Q3</accession>
<accession>Q3UD09</accession>
<accession>Q6PD49</accession>
<accession>Q8BN50</accession>
<accession>Q8C3S7</accession>
<comment type="function">
    <text evidence="2">RNA-binding protein involved in deadenylation-dependent decapping of mRNAs, leading to the degradation of mRNAs. Acts as a scaffold protein that connects deadenylation and decapping machinery. Required for cytoplasmic mRNA processing body (P-body) assembly.</text>
</comment>
<comment type="subunit">
    <text evidence="2">Interacts (via region A) with DDX6/RCK. Interacts (via region H and region C) with LSM1 and LSM4. Interacts (via region N) with DCP1A, DCP2, EDC3, EDC4 and XRN1. Interacts with the CCR4-NOT complex. Interacts with the Lsm-containing SMN-Sm protein complex. Interacts with EIF4ENIF1/4E-T.</text>
</comment>
<comment type="subcellular location">
    <subcellularLocation>
        <location evidence="2">Cytoplasm</location>
        <location evidence="2">P-body</location>
    </subcellularLocation>
    <subcellularLocation>
        <location evidence="2">Nucleus</location>
    </subcellularLocation>
    <subcellularLocation>
        <location evidence="2">Nucleus</location>
        <location evidence="2">PML body</location>
    </subcellularLocation>
    <subcellularLocation>
        <location evidence="2">Nucleus speckle</location>
    </subcellularLocation>
    <text evidence="2">Predominantly cytoplasmic. Shuttles between the nucleus and the cytoplasm in a CRM1-dependent manner. Enriched in splicing speckles. Localization to nuclear foci and speckles requires active transcription. Excluded from the nucleolus.</text>
</comment>
<comment type="domain">
    <text evidence="1">The region C, also named Pat-C, is required for RNA-binding and mediates the binding with the Lsm-containing SMN-Sm protein complex and the decapping machinery. It folds into an alpha-alpha superhelix, exposing conserved and basic residues on one side of the domain.</text>
</comment>
<comment type="similarity">
    <text evidence="4">Belongs to the PAT1 family.</text>
</comment>
<organism>
    <name type="scientific">Mus musculus</name>
    <name type="common">Mouse</name>
    <dbReference type="NCBI Taxonomy" id="10090"/>
    <lineage>
        <taxon>Eukaryota</taxon>
        <taxon>Metazoa</taxon>
        <taxon>Chordata</taxon>
        <taxon>Craniata</taxon>
        <taxon>Vertebrata</taxon>
        <taxon>Euteleostomi</taxon>
        <taxon>Mammalia</taxon>
        <taxon>Eutheria</taxon>
        <taxon>Euarchontoglires</taxon>
        <taxon>Glires</taxon>
        <taxon>Rodentia</taxon>
        <taxon>Myomorpha</taxon>
        <taxon>Muroidea</taxon>
        <taxon>Muridae</taxon>
        <taxon>Murinae</taxon>
        <taxon>Mus</taxon>
        <taxon>Mus</taxon>
    </lineage>
</organism>
<keyword id="KW-0963">Cytoplasm</keyword>
<keyword id="KW-0488">Methylation</keyword>
<keyword id="KW-0539">Nucleus</keyword>
<keyword id="KW-0597">Phosphoprotein</keyword>
<keyword id="KW-1185">Reference proteome</keyword>
<keyword id="KW-0694">RNA-binding</keyword>
<protein>
    <recommendedName>
        <fullName>Protein PAT1 homolog 1</fullName>
    </recommendedName>
    <alternativeName>
        <fullName>PAT1-like protein 1</fullName>
    </alternativeName>
    <alternativeName>
        <fullName>Protein PAT1 homolog b</fullName>
        <shortName>Pat1b</shortName>
    </alternativeName>
</protein>
<proteinExistence type="evidence at protein level"/>
<reference key="1">
    <citation type="journal article" date="2005" name="Science">
        <title>The transcriptional landscape of the mammalian genome.</title>
        <authorList>
            <person name="Carninci P."/>
            <person name="Kasukawa T."/>
            <person name="Katayama S."/>
            <person name="Gough J."/>
            <person name="Frith M.C."/>
            <person name="Maeda N."/>
            <person name="Oyama R."/>
            <person name="Ravasi T."/>
            <person name="Lenhard B."/>
            <person name="Wells C."/>
            <person name="Kodzius R."/>
            <person name="Shimokawa K."/>
            <person name="Bajic V.B."/>
            <person name="Brenner S.E."/>
            <person name="Batalov S."/>
            <person name="Forrest A.R."/>
            <person name="Zavolan M."/>
            <person name="Davis M.J."/>
            <person name="Wilming L.G."/>
            <person name="Aidinis V."/>
            <person name="Allen J.E."/>
            <person name="Ambesi-Impiombato A."/>
            <person name="Apweiler R."/>
            <person name="Aturaliya R.N."/>
            <person name="Bailey T.L."/>
            <person name="Bansal M."/>
            <person name="Baxter L."/>
            <person name="Beisel K.W."/>
            <person name="Bersano T."/>
            <person name="Bono H."/>
            <person name="Chalk A.M."/>
            <person name="Chiu K.P."/>
            <person name="Choudhary V."/>
            <person name="Christoffels A."/>
            <person name="Clutterbuck D.R."/>
            <person name="Crowe M.L."/>
            <person name="Dalla E."/>
            <person name="Dalrymple B.P."/>
            <person name="de Bono B."/>
            <person name="Della Gatta G."/>
            <person name="di Bernardo D."/>
            <person name="Down T."/>
            <person name="Engstrom P."/>
            <person name="Fagiolini M."/>
            <person name="Faulkner G."/>
            <person name="Fletcher C.F."/>
            <person name="Fukushima T."/>
            <person name="Furuno M."/>
            <person name="Futaki S."/>
            <person name="Gariboldi M."/>
            <person name="Georgii-Hemming P."/>
            <person name="Gingeras T.R."/>
            <person name="Gojobori T."/>
            <person name="Green R.E."/>
            <person name="Gustincich S."/>
            <person name="Harbers M."/>
            <person name="Hayashi Y."/>
            <person name="Hensch T.K."/>
            <person name="Hirokawa N."/>
            <person name="Hill D."/>
            <person name="Huminiecki L."/>
            <person name="Iacono M."/>
            <person name="Ikeo K."/>
            <person name="Iwama A."/>
            <person name="Ishikawa T."/>
            <person name="Jakt M."/>
            <person name="Kanapin A."/>
            <person name="Katoh M."/>
            <person name="Kawasawa Y."/>
            <person name="Kelso J."/>
            <person name="Kitamura H."/>
            <person name="Kitano H."/>
            <person name="Kollias G."/>
            <person name="Krishnan S.P."/>
            <person name="Kruger A."/>
            <person name="Kummerfeld S.K."/>
            <person name="Kurochkin I.V."/>
            <person name="Lareau L.F."/>
            <person name="Lazarevic D."/>
            <person name="Lipovich L."/>
            <person name="Liu J."/>
            <person name="Liuni S."/>
            <person name="McWilliam S."/>
            <person name="Madan Babu M."/>
            <person name="Madera M."/>
            <person name="Marchionni L."/>
            <person name="Matsuda H."/>
            <person name="Matsuzawa S."/>
            <person name="Miki H."/>
            <person name="Mignone F."/>
            <person name="Miyake S."/>
            <person name="Morris K."/>
            <person name="Mottagui-Tabar S."/>
            <person name="Mulder N."/>
            <person name="Nakano N."/>
            <person name="Nakauchi H."/>
            <person name="Ng P."/>
            <person name="Nilsson R."/>
            <person name="Nishiguchi S."/>
            <person name="Nishikawa S."/>
            <person name="Nori F."/>
            <person name="Ohara O."/>
            <person name="Okazaki Y."/>
            <person name="Orlando V."/>
            <person name="Pang K.C."/>
            <person name="Pavan W.J."/>
            <person name="Pavesi G."/>
            <person name="Pesole G."/>
            <person name="Petrovsky N."/>
            <person name="Piazza S."/>
            <person name="Reed J."/>
            <person name="Reid J.F."/>
            <person name="Ring B.Z."/>
            <person name="Ringwald M."/>
            <person name="Rost B."/>
            <person name="Ruan Y."/>
            <person name="Salzberg S.L."/>
            <person name="Sandelin A."/>
            <person name="Schneider C."/>
            <person name="Schoenbach C."/>
            <person name="Sekiguchi K."/>
            <person name="Semple C.A."/>
            <person name="Seno S."/>
            <person name="Sessa L."/>
            <person name="Sheng Y."/>
            <person name="Shibata Y."/>
            <person name="Shimada H."/>
            <person name="Shimada K."/>
            <person name="Silva D."/>
            <person name="Sinclair B."/>
            <person name="Sperling S."/>
            <person name="Stupka E."/>
            <person name="Sugiura K."/>
            <person name="Sultana R."/>
            <person name="Takenaka Y."/>
            <person name="Taki K."/>
            <person name="Tammoja K."/>
            <person name="Tan S.L."/>
            <person name="Tang S."/>
            <person name="Taylor M.S."/>
            <person name="Tegner J."/>
            <person name="Teichmann S.A."/>
            <person name="Ueda H.R."/>
            <person name="van Nimwegen E."/>
            <person name="Verardo R."/>
            <person name="Wei C.L."/>
            <person name="Yagi K."/>
            <person name="Yamanishi H."/>
            <person name="Zabarovsky E."/>
            <person name="Zhu S."/>
            <person name="Zimmer A."/>
            <person name="Hide W."/>
            <person name="Bult C."/>
            <person name="Grimmond S.M."/>
            <person name="Teasdale R.D."/>
            <person name="Liu E.T."/>
            <person name="Brusic V."/>
            <person name="Quackenbush J."/>
            <person name="Wahlestedt C."/>
            <person name="Mattick J.S."/>
            <person name="Hume D.A."/>
            <person name="Kai C."/>
            <person name="Sasaki D."/>
            <person name="Tomaru Y."/>
            <person name="Fukuda S."/>
            <person name="Kanamori-Katayama M."/>
            <person name="Suzuki M."/>
            <person name="Aoki J."/>
            <person name="Arakawa T."/>
            <person name="Iida J."/>
            <person name="Imamura K."/>
            <person name="Itoh M."/>
            <person name="Kato T."/>
            <person name="Kawaji H."/>
            <person name="Kawagashira N."/>
            <person name="Kawashima T."/>
            <person name="Kojima M."/>
            <person name="Kondo S."/>
            <person name="Konno H."/>
            <person name="Nakano K."/>
            <person name="Ninomiya N."/>
            <person name="Nishio T."/>
            <person name="Okada M."/>
            <person name="Plessy C."/>
            <person name="Shibata K."/>
            <person name="Shiraki T."/>
            <person name="Suzuki S."/>
            <person name="Tagami M."/>
            <person name="Waki K."/>
            <person name="Watahiki A."/>
            <person name="Okamura-Oho Y."/>
            <person name="Suzuki H."/>
            <person name="Kawai J."/>
            <person name="Hayashizaki Y."/>
        </authorList>
    </citation>
    <scope>NUCLEOTIDE SEQUENCE [LARGE SCALE MRNA]</scope>
    <source>
        <strain>C57BL/6J</strain>
        <strain>NOD</strain>
        <tissue>Bone marrow</tissue>
        <tissue>Eye</tissue>
        <tissue>Lung</tissue>
    </source>
</reference>
<reference key="2">
    <citation type="journal article" date="2004" name="Genome Res.">
        <title>The status, quality, and expansion of the NIH full-length cDNA project: the Mammalian Gene Collection (MGC).</title>
        <authorList>
            <consortium name="The MGC Project Team"/>
        </authorList>
    </citation>
    <scope>NUCLEOTIDE SEQUENCE [LARGE SCALE MRNA]</scope>
    <source>
        <strain>C57BL/6J</strain>
        <tissue>Brain</tissue>
    </source>
</reference>
<reference key="3">
    <citation type="journal article" date="2007" name="Proc. Natl. Acad. Sci. U.S.A.">
        <title>Large-scale phosphorylation analysis of mouse liver.</title>
        <authorList>
            <person name="Villen J."/>
            <person name="Beausoleil S.A."/>
            <person name="Gerber S.A."/>
            <person name="Gygi S.P."/>
        </authorList>
    </citation>
    <scope>PHOSPHORYLATION [LARGE SCALE ANALYSIS] AT THR-178; SER-179 AND SER-184</scope>
    <scope>IDENTIFICATION BY MASS SPECTROMETRY [LARGE SCALE ANALYSIS]</scope>
    <source>
        <tissue>Liver</tissue>
    </source>
</reference>
<reference key="4">
    <citation type="journal article" date="2010" name="Cell">
        <title>A tissue-specific atlas of mouse protein phosphorylation and expression.</title>
        <authorList>
            <person name="Huttlin E.L."/>
            <person name="Jedrychowski M.P."/>
            <person name="Elias J.E."/>
            <person name="Goswami T."/>
            <person name="Rad R."/>
            <person name="Beausoleil S.A."/>
            <person name="Villen J."/>
            <person name="Haas W."/>
            <person name="Sowa M.E."/>
            <person name="Gygi S.P."/>
        </authorList>
    </citation>
    <scope>PHOSPHORYLATION [LARGE SCALE ANALYSIS] AT SER-177; SER-179 AND SER-184</scope>
    <scope>IDENTIFICATION BY MASS SPECTROMETRY [LARGE SCALE ANALYSIS]</scope>
    <source>
        <tissue>Heart</tissue>
        <tissue>Lung</tissue>
        <tissue>Pancreas</tissue>
        <tissue>Spleen</tissue>
        <tissue>Testis</tissue>
    </source>
</reference>
<reference key="5">
    <citation type="journal article" date="2014" name="Mol. Cell. Proteomics">
        <title>Immunoaffinity enrichment and mass spectrometry analysis of protein methylation.</title>
        <authorList>
            <person name="Guo A."/>
            <person name="Gu H."/>
            <person name="Zhou J."/>
            <person name="Mulhern D."/>
            <person name="Wang Y."/>
            <person name="Lee K.A."/>
            <person name="Yang V."/>
            <person name="Aguiar M."/>
            <person name="Kornhauser J."/>
            <person name="Jia X."/>
            <person name="Ren J."/>
            <person name="Beausoleil S.A."/>
            <person name="Silva J.C."/>
            <person name="Vemulapalli V."/>
            <person name="Bedford M.T."/>
            <person name="Comb M.J."/>
        </authorList>
    </citation>
    <scope>METHYLATION [LARGE SCALE ANALYSIS] AT ARG-217; ARG-223; ARG-263; ARG-284 AND ARG-385</scope>
    <scope>IDENTIFICATION BY MASS SPECTROMETRY [LARGE SCALE ANALYSIS]</scope>
    <source>
        <tissue>Brain</tissue>
        <tissue>Embryo</tissue>
    </source>
</reference>
<dbReference type="EMBL" id="AK085013">
    <property type="protein sequence ID" value="BAC39337.1"/>
    <property type="molecule type" value="mRNA"/>
</dbReference>
<dbReference type="EMBL" id="AK087559">
    <property type="protein sequence ID" value="BAC39927.1"/>
    <property type="molecule type" value="mRNA"/>
</dbReference>
<dbReference type="EMBL" id="AK150301">
    <property type="protein sequence ID" value="BAE29453.1"/>
    <property type="molecule type" value="mRNA"/>
</dbReference>
<dbReference type="EMBL" id="AK154102">
    <property type="protein sequence ID" value="BAE32378.1"/>
    <property type="molecule type" value="mRNA"/>
</dbReference>
<dbReference type="EMBL" id="AK170408">
    <property type="protein sequence ID" value="BAE41774.1"/>
    <property type="molecule type" value="mRNA"/>
</dbReference>
<dbReference type="EMBL" id="AK170745">
    <property type="protein sequence ID" value="BAE41998.1"/>
    <property type="molecule type" value="mRNA"/>
</dbReference>
<dbReference type="EMBL" id="AK170918">
    <property type="protein sequence ID" value="BAE42111.1"/>
    <property type="molecule type" value="mRNA"/>
</dbReference>
<dbReference type="EMBL" id="BC058941">
    <property type="protein sequence ID" value="AAH58941.1"/>
    <property type="molecule type" value="mRNA"/>
</dbReference>
<dbReference type="CCDS" id="CCDS37924.1"/>
<dbReference type="RefSeq" id="NP_766223.2">
    <property type="nucleotide sequence ID" value="NM_172635.4"/>
</dbReference>
<dbReference type="SMR" id="Q3TC46"/>
<dbReference type="BioGRID" id="230453">
    <property type="interactions" value="2"/>
</dbReference>
<dbReference type="FunCoup" id="Q3TC46">
    <property type="interactions" value="2695"/>
</dbReference>
<dbReference type="STRING" id="10090.ENSMUSP00000060398"/>
<dbReference type="GlyGen" id="Q3TC46">
    <property type="glycosylation" value="2 sites, 1 N-linked glycan (1 site)"/>
</dbReference>
<dbReference type="iPTMnet" id="Q3TC46"/>
<dbReference type="PhosphoSitePlus" id="Q3TC46"/>
<dbReference type="jPOST" id="Q3TC46"/>
<dbReference type="PaxDb" id="10090-ENSMUSP00000060398"/>
<dbReference type="PeptideAtlas" id="Q3TC46"/>
<dbReference type="ProteomicsDB" id="287888"/>
<dbReference type="Pumba" id="Q3TC46"/>
<dbReference type="Antibodypedia" id="49853">
    <property type="antibodies" value="87 antibodies from 19 providers"/>
</dbReference>
<dbReference type="DNASU" id="225929"/>
<dbReference type="Ensembl" id="ENSMUST00000061618.9">
    <property type="protein sequence ID" value="ENSMUSP00000060398.8"/>
    <property type="gene ID" value="ENSMUSG00000046139.9"/>
</dbReference>
<dbReference type="GeneID" id="225929"/>
<dbReference type="KEGG" id="mmu:225929"/>
<dbReference type="UCSC" id="uc008gth.2">
    <property type="organism name" value="mouse"/>
</dbReference>
<dbReference type="AGR" id="MGI:2147679"/>
<dbReference type="CTD" id="219988"/>
<dbReference type="MGI" id="MGI:2147679">
    <property type="gene designation" value="Patl1"/>
</dbReference>
<dbReference type="VEuPathDB" id="HostDB:ENSMUSG00000046139"/>
<dbReference type="eggNOG" id="KOG4592">
    <property type="taxonomic scope" value="Eukaryota"/>
</dbReference>
<dbReference type="GeneTree" id="ENSGT00520000055649"/>
<dbReference type="HOGENOM" id="CLU_009778_1_0_1"/>
<dbReference type="InParanoid" id="Q3TC46"/>
<dbReference type="OMA" id="QAPMFRA"/>
<dbReference type="OrthoDB" id="74835at2759"/>
<dbReference type="PhylomeDB" id="Q3TC46"/>
<dbReference type="TreeFam" id="TF323322"/>
<dbReference type="Reactome" id="R-MMU-430039">
    <property type="pathway name" value="mRNA decay by 5' to 3' exoribonuclease"/>
</dbReference>
<dbReference type="BioGRID-ORCS" id="225929">
    <property type="hits" value="2 hits in 76 CRISPR screens"/>
</dbReference>
<dbReference type="ChiTaRS" id="Patl1">
    <property type="organism name" value="mouse"/>
</dbReference>
<dbReference type="PRO" id="PR:Q3TC46"/>
<dbReference type="Proteomes" id="UP000000589">
    <property type="component" value="Chromosome 19"/>
</dbReference>
<dbReference type="RNAct" id="Q3TC46">
    <property type="molecule type" value="protein"/>
</dbReference>
<dbReference type="Bgee" id="ENSMUSG00000046139">
    <property type="expression patterns" value="Expressed in embryonic post-anal tail and 228 other cell types or tissues"/>
</dbReference>
<dbReference type="ExpressionAtlas" id="Q3TC46">
    <property type="expression patterns" value="baseline and differential"/>
</dbReference>
<dbReference type="GO" id="GO:0030014">
    <property type="term" value="C:CCR4-NOT complex"/>
    <property type="evidence" value="ECO:0007669"/>
    <property type="project" value="Ensembl"/>
</dbReference>
<dbReference type="GO" id="GO:0005737">
    <property type="term" value="C:cytoplasm"/>
    <property type="evidence" value="ECO:0000266"/>
    <property type="project" value="MGI"/>
</dbReference>
<dbReference type="GO" id="GO:0005829">
    <property type="term" value="C:cytosol"/>
    <property type="evidence" value="ECO:0007669"/>
    <property type="project" value="Ensembl"/>
</dbReference>
<dbReference type="GO" id="GO:0016607">
    <property type="term" value="C:nuclear speck"/>
    <property type="evidence" value="ECO:0007669"/>
    <property type="project" value="UniProtKB-SubCell"/>
</dbReference>
<dbReference type="GO" id="GO:0000932">
    <property type="term" value="C:P-body"/>
    <property type="evidence" value="ECO:0000250"/>
    <property type="project" value="UniProtKB"/>
</dbReference>
<dbReference type="GO" id="GO:0016605">
    <property type="term" value="C:PML body"/>
    <property type="evidence" value="ECO:0007669"/>
    <property type="project" value="UniProtKB-SubCell"/>
</dbReference>
<dbReference type="GO" id="GO:0002151">
    <property type="term" value="F:G-quadruplex RNA binding"/>
    <property type="evidence" value="ECO:0000266"/>
    <property type="project" value="MGI"/>
</dbReference>
<dbReference type="GO" id="GO:0034046">
    <property type="term" value="F:poly(G) binding"/>
    <property type="evidence" value="ECO:0000266"/>
    <property type="project" value="MGI"/>
</dbReference>
<dbReference type="GO" id="GO:0008266">
    <property type="term" value="F:poly(U) RNA binding"/>
    <property type="evidence" value="ECO:0000266"/>
    <property type="project" value="MGI"/>
</dbReference>
<dbReference type="GO" id="GO:0003723">
    <property type="term" value="F:RNA binding"/>
    <property type="evidence" value="ECO:0000250"/>
    <property type="project" value="UniProtKB"/>
</dbReference>
<dbReference type="GO" id="GO:0030371">
    <property type="term" value="F:translation repressor activity"/>
    <property type="evidence" value="ECO:0000266"/>
    <property type="project" value="MGI"/>
</dbReference>
<dbReference type="GO" id="GO:0000290">
    <property type="term" value="P:deadenylation-dependent decapping of nuclear-transcribed mRNA"/>
    <property type="evidence" value="ECO:0000250"/>
    <property type="project" value="UniProtKB"/>
</dbReference>
<dbReference type="GO" id="GO:0017148">
    <property type="term" value="P:negative regulation of translation"/>
    <property type="evidence" value="ECO:0000266"/>
    <property type="project" value="MGI"/>
</dbReference>
<dbReference type="GO" id="GO:0033962">
    <property type="term" value="P:P-body assembly"/>
    <property type="evidence" value="ECO:0000250"/>
    <property type="project" value="UniProtKB"/>
</dbReference>
<dbReference type="InterPro" id="IPR039900">
    <property type="entry name" value="Pat1-like"/>
</dbReference>
<dbReference type="InterPro" id="IPR019167">
    <property type="entry name" value="PAT1_dom"/>
</dbReference>
<dbReference type="PANTHER" id="PTHR21551:SF2">
    <property type="entry name" value="PROTEIN PAT1 HOMOLOG 1"/>
    <property type="match status" value="1"/>
</dbReference>
<dbReference type="PANTHER" id="PTHR21551">
    <property type="entry name" value="TOPOISOMERASE II-ASSOCIATED PROTEIN PAT1"/>
    <property type="match status" value="1"/>
</dbReference>
<dbReference type="Pfam" id="PF09770">
    <property type="entry name" value="PAT1"/>
    <property type="match status" value="1"/>
</dbReference>
<gene>
    <name type="primary">Patl1</name>
</gene>
<feature type="chain" id="PRO_0000320964" description="Protein PAT1 homolog 1">
    <location>
        <begin position="1"/>
        <end position="770"/>
    </location>
</feature>
<feature type="region of interest" description="Involved in nuclear foci localization" evidence="1">
    <location>
        <begin position="1"/>
        <end position="397"/>
    </location>
</feature>
<feature type="region of interest" description="Region A; interaction with DDX6/RCK" evidence="1">
    <location>
        <begin position="1"/>
        <end position="84"/>
    </location>
</feature>
<feature type="region of interest" description="Disordered" evidence="3">
    <location>
        <begin position="1"/>
        <end position="42"/>
    </location>
</feature>
<feature type="region of interest" description="Region N; interaction with decapping machinery" evidence="1">
    <location>
        <begin position="85"/>
        <end position="388"/>
    </location>
</feature>
<feature type="region of interest" description="Disordered" evidence="3">
    <location>
        <begin position="155"/>
        <end position="195"/>
    </location>
</feature>
<feature type="region of interest" description="Involved in RNA-binding" evidence="1">
    <location>
        <begin position="223"/>
        <end position="397"/>
    </location>
</feature>
<feature type="region of interest" description="Disordered" evidence="3">
    <location>
        <begin position="319"/>
        <end position="340"/>
    </location>
</feature>
<feature type="region of interest" description="Disordered" evidence="3">
    <location>
        <begin position="376"/>
        <end position="396"/>
    </location>
</feature>
<feature type="region of interest" description="Region H" evidence="1">
    <location>
        <begin position="389"/>
        <end position="448"/>
    </location>
</feature>
<feature type="region of interest" description="Involved in nuclear speckle localization" evidence="1">
    <location>
        <begin position="398"/>
        <end position="770"/>
    </location>
</feature>
<feature type="region of interest" description="Region C" evidence="1">
    <location>
        <begin position="449"/>
        <end position="770"/>
    </location>
</feature>
<feature type="short sequence motif" description="Nuclear export signal" evidence="1">
    <location>
        <begin position="86"/>
        <end position="95"/>
    </location>
</feature>
<feature type="compositionally biased region" description="Acidic residues" evidence="3">
    <location>
        <begin position="7"/>
        <end position="33"/>
    </location>
</feature>
<feature type="compositionally biased region" description="Pro residues" evidence="3">
    <location>
        <begin position="321"/>
        <end position="337"/>
    </location>
</feature>
<feature type="compositionally biased region" description="Basic and acidic residues" evidence="3">
    <location>
        <begin position="385"/>
        <end position="396"/>
    </location>
</feature>
<feature type="modified residue" description="Phosphoserine" evidence="6">
    <location>
        <position position="177"/>
    </location>
</feature>
<feature type="modified residue" description="Phosphothreonine" evidence="5">
    <location>
        <position position="178"/>
    </location>
</feature>
<feature type="modified residue" description="Phosphoserine" evidence="5 6">
    <location>
        <position position="179"/>
    </location>
</feature>
<feature type="modified residue" description="Phosphoserine" evidence="5 6">
    <location>
        <position position="184"/>
    </location>
</feature>
<feature type="modified residue" description="Phosphothreonine" evidence="2">
    <location>
        <position position="194"/>
    </location>
</feature>
<feature type="modified residue" description="Asymmetric dimethylarginine" evidence="7">
    <location>
        <position position="217"/>
    </location>
</feature>
<feature type="modified residue" description="Asymmetric dimethylarginine" evidence="7">
    <location>
        <position position="223"/>
    </location>
</feature>
<feature type="modified residue" description="Asymmetric dimethylarginine" evidence="7">
    <location>
        <position position="263"/>
    </location>
</feature>
<feature type="modified residue" description="Phosphoserine" evidence="2">
    <location>
        <position position="278"/>
    </location>
</feature>
<feature type="modified residue" description="Asymmetric dimethylarginine" evidence="7">
    <location>
        <position position="284"/>
    </location>
</feature>
<feature type="modified residue" description="Omega-N-methylarginine" evidence="7">
    <location>
        <position position="385"/>
    </location>
</feature>
<feature type="sequence conflict" description="In Ref. 1; BAC39337." evidence="4" ref="1">
    <original>C</original>
    <variation>W</variation>
    <location>
        <position position="10"/>
    </location>
</feature>
<feature type="sequence conflict" description="In Ref. 1; BAC39337." evidence="4" ref="1">
    <original>D</original>
    <variation>H</variation>
    <location>
        <position position="13"/>
    </location>
</feature>
<feature type="sequence conflict" description="In Ref. 1; BAC39337." evidence="4" ref="1">
    <original>D</original>
    <variation>H</variation>
    <location>
        <position position="17"/>
    </location>
</feature>
<feature type="sequence conflict" description="In Ref. 1; BAC39337." evidence="4" ref="1">
    <original>Q</original>
    <variation>Y</variation>
    <location>
        <position position="20"/>
    </location>
</feature>
<feature type="sequence conflict" description="In Ref. 1; BAE41774." evidence="4" ref="1">
    <original>N</original>
    <variation>S</variation>
    <location>
        <position position="97"/>
    </location>
</feature>
<feature type="sequence conflict" description="In Ref. 1; BAE32378." evidence="4" ref="1">
    <original>Q</original>
    <variation>H</variation>
    <location>
        <position position="156"/>
    </location>
</feature>
<feature type="sequence conflict" description="In Ref. 1; BAC39927." evidence="4" ref="1">
    <original>R</original>
    <variation>G</variation>
    <location>
        <position position="176"/>
    </location>
</feature>
<feature type="sequence conflict" description="In Ref. 1; BAE32378." evidence="4" ref="1">
    <original>P</original>
    <variation>T</variation>
    <location>
        <position position="196"/>
    </location>
</feature>
<feature type="sequence conflict" description="In Ref. 1; BAE42111/BAE32378." evidence="4" ref="1">
    <original>Q</original>
    <variation>R</variation>
    <location>
        <position position="389"/>
    </location>
</feature>
<feature type="sequence conflict" description="In Ref. 1; BAE29453." evidence="4" ref="1">
    <original>D</original>
    <variation>G</variation>
    <location>
        <position position="698"/>
    </location>
</feature>
<sequence>MFRYESLEDCPLDEDEDAFQGLGEEDEEIDQFNDDTFGSGAVDDDWQEAHERLAELEEKLPVAADEQTGNGERDEMDLLGDHEENLAERLSKMVIENELEDPAIMRAVQTRPVLQPQPGSLNSSIWDGSEVLRRIRGPLLAQEMPTVSVLEYALPQRPLQGPEDDRDLSERALPRRSTSPIIGSPPVRAVPIGTPPKQMAVPSFNQQILCPKPVHVRPPMPPRYPAPYGERISPNQLCSVPNSSLLGHPFPPNVPPVLSPLQRAQLLGGAQLQPGRMSPSQFARVPGFVGSPLAAMNPKLLQGRVGQMLPPAPSFRAFFSAPPPATPPPQQHPPGPGPHLQNLRPQAPMFRADTTHLHPQHRRLLHQRQLQSRNQHRNLNGTGDRGGHQSSHQDHLRKDPYANLMLQREKDWVSKIQMMQLQSTDPYLDDFYYQNYFEKLEKLSAAEEIQGDGPKKERTKLITPQVAKLEHAYQPVQFEGSLGKLTVSSVNNPRKMIDAVVTSRSEDDETKEKQVRDKRRKTLVIIEKTYSLLLDVEDYERRYLLSLEEERPALMDERKHKICSMYDNLRGKLPGQERPSDDHFVQIMCIRKGKRMVARILPFLSTEQAADILMATARNLPFLIKKDAQDEVLPCLLSPFSLLLYHLPSVTVTSLLQQLMNLPQSASAPAPSNSHLTAVLQNKFGLSLLLILLSRGEDLQSSDPAIESTQNNQWTEVMFMATRELLRIPQAALAKPISIPTNLVSLFSRYVDRQKLNLLETKLQLVQGIR</sequence>